<feature type="chain" id="PRO_1000079876" description="Large ribosomal subunit protein uL29">
    <location>
        <begin position="1"/>
        <end position="66"/>
    </location>
</feature>
<evidence type="ECO:0000255" key="1">
    <source>
        <dbReference type="HAMAP-Rule" id="MF_00374"/>
    </source>
</evidence>
<evidence type="ECO:0000305" key="2"/>
<proteinExistence type="inferred from homology"/>
<organism>
    <name type="scientific">Brucella suis (strain ATCC 23445 / NCTC 10510)</name>
    <dbReference type="NCBI Taxonomy" id="470137"/>
    <lineage>
        <taxon>Bacteria</taxon>
        <taxon>Pseudomonadati</taxon>
        <taxon>Pseudomonadota</taxon>
        <taxon>Alphaproteobacteria</taxon>
        <taxon>Hyphomicrobiales</taxon>
        <taxon>Brucellaceae</taxon>
        <taxon>Brucella/Ochrobactrum group</taxon>
        <taxon>Brucella</taxon>
    </lineage>
</organism>
<reference key="1">
    <citation type="submission" date="2007-12" db="EMBL/GenBank/DDBJ databases">
        <title>Brucella suis ATCC 23445 whole genome shotgun sequencing project.</title>
        <authorList>
            <person name="Setubal J.C."/>
            <person name="Bowns C."/>
            <person name="Boyle S."/>
            <person name="Crasta O.R."/>
            <person name="Czar M.J."/>
            <person name="Dharmanolla C."/>
            <person name="Gillespie J.J."/>
            <person name="Kenyon R.W."/>
            <person name="Lu J."/>
            <person name="Mane S."/>
            <person name="Mohapatra S."/>
            <person name="Nagrani S."/>
            <person name="Purkayastha A."/>
            <person name="Rajasimha H.K."/>
            <person name="Shallom J.M."/>
            <person name="Shallom S."/>
            <person name="Shukla M."/>
            <person name="Snyder E.E."/>
            <person name="Sobral B.W."/>
            <person name="Wattam A.R."/>
            <person name="Will R."/>
            <person name="Williams K."/>
            <person name="Yoo H."/>
            <person name="Bruce D."/>
            <person name="Detter C."/>
            <person name="Munk C."/>
            <person name="Brettin T.S."/>
        </authorList>
    </citation>
    <scope>NUCLEOTIDE SEQUENCE [LARGE SCALE GENOMIC DNA]</scope>
    <source>
        <strain>ATCC 23445 / NCTC 10510</strain>
    </source>
</reference>
<keyword id="KW-0687">Ribonucleoprotein</keyword>
<keyword id="KW-0689">Ribosomal protein</keyword>
<sequence length="66" mass="7512">MKAADVRAKSLDQLNDELGTLKKEQFNLRFQKATGQLEKTARVKQVRRDIARIKTIARQKAAESKA</sequence>
<gene>
    <name evidence="1" type="primary">rpmC</name>
    <name type="ordered locus">BSUIS_A1274</name>
</gene>
<accession>B0CH24</accession>
<dbReference type="EMBL" id="CP000911">
    <property type="protein sequence ID" value="ABY38325.1"/>
    <property type="molecule type" value="Genomic_DNA"/>
</dbReference>
<dbReference type="RefSeq" id="WP_002964354.1">
    <property type="nucleotide sequence ID" value="NC_010169.1"/>
</dbReference>
<dbReference type="SMR" id="B0CH24"/>
<dbReference type="GeneID" id="97533532"/>
<dbReference type="KEGG" id="bmt:BSUIS_A1274"/>
<dbReference type="HOGENOM" id="CLU_158491_1_0_5"/>
<dbReference type="Proteomes" id="UP000008545">
    <property type="component" value="Chromosome I"/>
</dbReference>
<dbReference type="GO" id="GO:0022625">
    <property type="term" value="C:cytosolic large ribosomal subunit"/>
    <property type="evidence" value="ECO:0007669"/>
    <property type="project" value="TreeGrafter"/>
</dbReference>
<dbReference type="GO" id="GO:0003735">
    <property type="term" value="F:structural constituent of ribosome"/>
    <property type="evidence" value="ECO:0007669"/>
    <property type="project" value="InterPro"/>
</dbReference>
<dbReference type="GO" id="GO:0006412">
    <property type="term" value="P:translation"/>
    <property type="evidence" value="ECO:0007669"/>
    <property type="project" value="UniProtKB-UniRule"/>
</dbReference>
<dbReference type="CDD" id="cd00427">
    <property type="entry name" value="Ribosomal_L29_HIP"/>
    <property type="match status" value="1"/>
</dbReference>
<dbReference type="FunFam" id="1.10.287.310:FF:000001">
    <property type="entry name" value="50S ribosomal protein L29"/>
    <property type="match status" value="1"/>
</dbReference>
<dbReference type="Gene3D" id="1.10.287.310">
    <property type="match status" value="1"/>
</dbReference>
<dbReference type="HAMAP" id="MF_00374">
    <property type="entry name" value="Ribosomal_uL29"/>
    <property type="match status" value="1"/>
</dbReference>
<dbReference type="InterPro" id="IPR050063">
    <property type="entry name" value="Ribosomal_protein_uL29"/>
</dbReference>
<dbReference type="InterPro" id="IPR001854">
    <property type="entry name" value="Ribosomal_uL29"/>
</dbReference>
<dbReference type="InterPro" id="IPR018254">
    <property type="entry name" value="Ribosomal_uL29_CS"/>
</dbReference>
<dbReference type="InterPro" id="IPR036049">
    <property type="entry name" value="Ribosomal_uL29_sf"/>
</dbReference>
<dbReference type="NCBIfam" id="TIGR00012">
    <property type="entry name" value="L29"/>
    <property type="match status" value="1"/>
</dbReference>
<dbReference type="PANTHER" id="PTHR10916">
    <property type="entry name" value="60S RIBOSOMAL PROTEIN L35/50S RIBOSOMAL PROTEIN L29"/>
    <property type="match status" value="1"/>
</dbReference>
<dbReference type="PANTHER" id="PTHR10916:SF0">
    <property type="entry name" value="LARGE RIBOSOMAL SUBUNIT PROTEIN UL29C"/>
    <property type="match status" value="1"/>
</dbReference>
<dbReference type="Pfam" id="PF00831">
    <property type="entry name" value="Ribosomal_L29"/>
    <property type="match status" value="1"/>
</dbReference>
<dbReference type="SUPFAM" id="SSF46561">
    <property type="entry name" value="Ribosomal protein L29 (L29p)"/>
    <property type="match status" value="1"/>
</dbReference>
<dbReference type="PROSITE" id="PS00579">
    <property type="entry name" value="RIBOSOMAL_L29"/>
    <property type="match status" value="1"/>
</dbReference>
<name>RL29_BRUSI</name>
<protein>
    <recommendedName>
        <fullName evidence="1">Large ribosomal subunit protein uL29</fullName>
    </recommendedName>
    <alternativeName>
        <fullName evidence="2">50S ribosomal protein L29</fullName>
    </alternativeName>
</protein>
<comment type="similarity">
    <text evidence="1">Belongs to the universal ribosomal protein uL29 family.</text>
</comment>